<evidence type="ECO:0000250" key="1"/>
<evidence type="ECO:0000250" key="2">
    <source>
        <dbReference type="UniProtKB" id="P05160"/>
    </source>
</evidence>
<evidence type="ECO:0000255" key="3"/>
<evidence type="ECO:0000255" key="4">
    <source>
        <dbReference type="PROSITE-ProRule" id="PRU00302"/>
    </source>
</evidence>
<evidence type="ECO:0000269" key="5">
    <source>
    </source>
</evidence>
<evidence type="ECO:0000269" key="6">
    <source>
    </source>
</evidence>
<evidence type="ECO:0000269" key="7">
    <source>
    </source>
</evidence>
<evidence type="ECO:0000305" key="8"/>
<feature type="signal peptide" evidence="1">
    <location>
        <begin position="1"/>
        <end position="21"/>
    </location>
</feature>
<feature type="chain" id="PRO_0000021223" description="Coagulation factor XIII B chain">
    <location>
        <begin position="22"/>
        <end position="669"/>
    </location>
</feature>
<feature type="domain" description="Sushi 1" evidence="4">
    <location>
        <begin position="25"/>
        <end position="89"/>
    </location>
</feature>
<feature type="domain" description="Sushi 2" evidence="4">
    <location>
        <begin position="90"/>
        <end position="149"/>
    </location>
</feature>
<feature type="domain" description="Sushi 3" evidence="4">
    <location>
        <begin position="152"/>
        <end position="211"/>
    </location>
</feature>
<feature type="domain" description="Sushi 4" evidence="4">
    <location>
        <begin position="212"/>
        <end position="270"/>
    </location>
</feature>
<feature type="domain" description="Sushi 5" evidence="4">
    <location>
        <begin position="273"/>
        <end position="330"/>
    </location>
</feature>
<feature type="domain" description="Sushi 6" evidence="4">
    <location>
        <begin position="335"/>
        <end position="392"/>
    </location>
</feature>
<feature type="domain" description="Sushi 7" evidence="4">
    <location>
        <begin position="395"/>
        <end position="453"/>
    </location>
</feature>
<feature type="domain" description="Sushi 8" evidence="4">
    <location>
        <begin position="454"/>
        <end position="517"/>
    </location>
</feature>
<feature type="domain" description="Sushi 9" evidence="4">
    <location>
        <begin position="523"/>
        <end position="581"/>
    </location>
</feature>
<feature type="domain" description="Sushi 10" evidence="4">
    <location>
        <begin position="582"/>
        <end position="648"/>
    </location>
</feature>
<feature type="glycosylation site" description="N-linked (GlcNAc...) asparagine" evidence="3">
    <location>
        <position position="163"/>
    </location>
</feature>
<feature type="glycosylation site" description="N-linked (GlcNAc...) asparagine" evidence="5 6">
    <location>
        <position position="546"/>
    </location>
</feature>
<feature type="disulfide bond" evidence="4">
    <location>
        <begin position="26"/>
        <end position="77"/>
    </location>
</feature>
<feature type="disulfide bond" evidence="4">
    <location>
        <begin position="60"/>
        <end position="88"/>
    </location>
</feature>
<feature type="disulfide bond" evidence="4">
    <location>
        <begin position="92"/>
        <end position="136"/>
    </location>
</feature>
<feature type="disulfide bond" evidence="4">
    <location>
        <begin position="119"/>
        <end position="147"/>
    </location>
</feature>
<feature type="disulfide bond" evidence="4">
    <location>
        <begin position="154"/>
        <end position="198"/>
    </location>
</feature>
<feature type="disulfide bond" evidence="4">
    <location>
        <begin position="181"/>
        <end position="209"/>
    </location>
</feature>
<feature type="disulfide bond" evidence="4">
    <location>
        <begin position="214"/>
        <end position="256"/>
    </location>
</feature>
<feature type="disulfide bond" evidence="4">
    <location>
        <begin position="242"/>
        <end position="268"/>
    </location>
</feature>
<feature type="disulfide bond" evidence="4">
    <location>
        <begin position="275"/>
        <end position="317"/>
    </location>
</feature>
<feature type="disulfide bond" evidence="4">
    <location>
        <begin position="303"/>
        <end position="328"/>
    </location>
</feature>
<feature type="disulfide bond" evidence="4">
    <location>
        <begin position="337"/>
        <end position="379"/>
    </location>
</feature>
<feature type="disulfide bond" evidence="4">
    <location>
        <begin position="365"/>
        <end position="390"/>
    </location>
</feature>
<feature type="disulfide bond" evidence="4">
    <location>
        <begin position="397"/>
        <end position="440"/>
    </location>
</feature>
<feature type="disulfide bond" evidence="4">
    <location>
        <begin position="426"/>
        <end position="451"/>
    </location>
</feature>
<feature type="disulfide bond" evidence="4">
    <location>
        <begin position="455"/>
        <end position="506"/>
    </location>
</feature>
<feature type="disulfide bond" evidence="4">
    <location>
        <begin position="487"/>
        <end position="516"/>
    </location>
</feature>
<feature type="disulfide bond" evidence="4">
    <location>
        <begin position="525"/>
        <end position="568"/>
    </location>
</feature>
<feature type="disulfide bond" evidence="4">
    <location>
        <begin position="554"/>
        <end position="579"/>
    </location>
</feature>
<feature type="disulfide bond" evidence="4">
    <location>
        <begin position="583"/>
        <end position="637"/>
    </location>
</feature>
<feature type="disulfide bond" evidence="4">
    <location>
        <begin position="617"/>
        <end position="647"/>
    </location>
</feature>
<feature type="sequence conflict" description="In Ref. 1; BAA00963." evidence="8" ref="1">
    <original>V</original>
    <variation>L</variation>
    <location>
        <position position="237"/>
    </location>
</feature>
<sequence length="669" mass="76195">MMTLRHLPFILLLILSGELYAEEKQCDFPTVENGRIAQYYYTFKSFYFPMSVDKKLSFFCLAGYATESGKQEEQIRCTAEGWSPNPRCYKKCLKPDLRNGYVSNDKVLYKLQERMSYGCSSGYKTTGGKDEEVVHCLSAGWSSQPSCRKEQETCLAPELEHGNYSTTQRTFKVKDIVAYTCTAGYYTTTGKQTGEAECQANGWSLTPQCNKLMCSSLRLIENGYFHPVKQTYEEGDVVQFFCHENYYLSGSDLIQCYNFGWYPESPICEGRRNRCPPPPVPLNSKIQPHSTTYRHGERVHIECELNFVIQGSEELLCENGKWTEPPKCIEEKEKVACEQPPSVENGVAHPHSEIYYSGDKVTYRCGGGYSLRGSSTITCNRGRWTLPPECVENIENCKPPPDIANGVVVDGLLASYTTGSSVEYRCNEYYLLKGSETSRCEQGAWSSPPVCLEPCTIDVDHMNRNNIQLKWKYEGKILHGDLIDFVCKQGYNLSPSIPLSEISAQCNRGDVRYPMCIRKESKGMCASPPVIRNGDIVSSAARTYENGSSVEYRCFDNHFLQGSQNVYCVDGVWTTPPSCLEPCTLSFVEMDKNYLQLKWNFDNRPLILHGEYIEFMCKRDAYISETSIAGSVLRVQCDRGRLKYPKCTPRDRRLSFQEALRTRRQMEKR</sequence>
<comment type="function">
    <text evidence="2">The B chain of factor XIII is not catalytically active, but is thought to stabilize the A subunits and regulate the rate of transglutaminase formation by thrombin.</text>
</comment>
<comment type="subunit">
    <text evidence="2">Tetramer of two A chains (F13A1) and two B (F13B) chains.</text>
</comment>
<comment type="subcellular location">
    <subcellularLocation>
        <location evidence="2">Secreted</location>
    </subcellularLocation>
</comment>
<comment type="tissue specificity">
    <text evidence="7">Predominantly expressed in liver and kidney.</text>
</comment>
<comment type="sequence caution" evidence="8">
    <conflict type="erroneous initiation">
        <sequence resource="EMBL-CDS" id="BAA00963"/>
    </conflict>
    <text>Truncated N-terminus.</text>
</comment>
<organism>
    <name type="scientific">Mus musculus</name>
    <name type="common">Mouse</name>
    <dbReference type="NCBI Taxonomy" id="10090"/>
    <lineage>
        <taxon>Eukaryota</taxon>
        <taxon>Metazoa</taxon>
        <taxon>Chordata</taxon>
        <taxon>Craniata</taxon>
        <taxon>Vertebrata</taxon>
        <taxon>Euteleostomi</taxon>
        <taxon>Mammalia</taxon>
        <taxon>Eutheria</taxon>
        <taxon>Euarchontoglires</taxon>
        <taxon>Glires</taxon>
        <taxon>Rodentia</taxon>
        <taxon>Myomorpha</taxon>
        <taxon>Muroidea</taxon>
        <taxon>Muridae</taxon>
        <taxon>Murinae</taxon>
        <taxon>Mus</taxon>
        <taxon>Mus</taxon>
    </lineage>
</organism>
<name>F13B_MOUSE</name>
<gene>
    <name type="primary">F13b</name>
    <name type="synonym">Cf13b</name>
</gene>
<dbReference type="EMBL" id="D10071">
    <property type="protein sequence ID" value="BAA00963.1"/>
    <property type="status" value="ALT_INIT"/>
    <property type="molecule type" value="mRNA"/>
</dbReference>
<dbReference type="EMBL" id="AC158946">
    <property type="status" value="NOT_ANNOTATED_CDS"/>
    <property type="molecule type" value="Genomic_DNA"/>
</dbReference>
<dbReference type="EMBL" id="AL837518">
    <property type="status" value="NOT_ANNOTATED_CDS"/>
    <property type="molecule type" value="Genomic_DNA"/>
</dbReference>
<dbReference type="EMBL" id="CH466520">
    <property type="protein sequence ID" value="EDL39526.1"/>
    <property type="molecule type" value="Genomic_DNA"/>
</dbReference>
<dbReference type="CCDS" id="CCDS48386.1"/>
<dbReference type="PIR" id="A46013">
    <property type="entry name" value="A46013"/>
</dbReference>
<dbReference type="RefSeq" id="NP_112441.2">
    <property type="nucleotide sequence ID" value="NM_031164.2"/>
</dbReference>
<dbReference type="SMR" id="Q07968"/>
<dbReference type="BioGRID" id="199567">
    <property type="interactions" value="4"/>
</dbReference>
<dbReference type="FunCoup" id="Q07968">
    <property type="interactions" value="33"/>
</dbReference>
<dbReference type="IntAct" id="Q07968">
    <property type="interactions" value="1"/>
</dbReference>
<dbReference type="STRING" id="10090.ENSMUSP00000027615"/>
<dbReference type="GlyCosmos" id="Q07968">
    <property type="glycosylation" value="2 sites, No reported glycans"/>
</dbReference>
<dbReference type="GlyGen" id="Q07968">
    <property type="glycosylation" value="2 sites, 2 N-linked glycans (2 sites)"/>
</dbReference>
<dbReference type="iPTMnet" id="Q07968"/>
<dbReference type="PhosphoSitePlus" id="Q07968"/>
<dbReference type="CPTAC" id="non-CPTAC-3398"/>
<dbReference type="CPTAC" id="non-CPTAC-3537"/>
<dbReference type="jPOST" id="Q07968"/>
<dbReference type="PaxDb" id="10090-ENSMUSP00000027615"/>
<dbReference type="PeptideAtlas" id="Q07968"/>
<dbReference type="ProteomicsDB" id="275497"/>
<dbReference type="Antibodypedia" id="868">
    <property type="antibodies" value="237 antibodies from 25 providers"/>
</dbReference>
<dbReference type="DNASU" id="14060"/>
<dbReference type="Ensembl" id="ENSMUST00000027615.7">
    <property type="protein sequence ID" value="ENSMUSP00000027615.6"/>
    <property type="gene ID" value="ENSMUSG00000026368.7"/>
</dbReference>
<dbReference type="GeneID" id="14060"/>
<dbReference type="KEGG" id="mmu:14060"/>
<dbReference type="UCSC" id="uc007cwk.2">
    <property type="organism name" value="mouse"/>
</dbReference>
<dbReference type="AGR" id="MGI:88379"/>
<dbReference type="CTD" id="2165"/>
<dbReference type="MGI" id="MGI:88379">
    <property type="gene designation" value="F13b"/>
</dbReference>
<dbReference type="VEuPathDB" id="HostDB:ENSMUSG00000026368"/>
<dbReference type="eggNOG" id="ENOG502RDCS">
    <property type="taxonomic scope" value="Eukaryota"/>
</dbReference>
<dbReference type="GeneTree" id="ENSGT00940000154967"/>
<dbReference type="HOGENOM" id="CLU_020107_6_0_1"/>
<dbReference type="InParanoid" id="Q07968"/>
<dbReference type="OMA" id="YTFKSFY"/>
<dbReference type="OrthoDB" id="9984531at2759"/>
<dbReference type="PhylomeDB" id="Q07968"/>
<dbReference type="TreeFam" id="TF326157"/>
<dbReference type="Reactome" id="R-MMU-140875">
    <property type="pathway name" value="Common Pathway of Fibrin Clot Formation"/>
</dbReference>
<dbReference type="BioGRID-ORCS" id="14060">
    <property type="hits" value="1 hit in 76 CRISPR screens"/>
</dbReference>
<dbReference type="PRO" id="PR:Q07968"/>
<dbReference type="Proteomes" id="UP000000589">
    <property type="component" value="Chromosome 1"/>
</dbReference>
<dbReference type="RNAct" id="Q07968">
    <property type="molecule type" value="protein"/>
</dbReference>
<dbReference type="Bgee" id="ENSMUSG00000026368">
    <property type="expression patterns" value="Expressed in left lobe of liver and 31 other cell types or tissues"/>
</dbReference>
<dbReference type="GO" id="GO:0005576">
    <property type="term" value="C:extracellular region"/>
    <property type="evidence" value="ECO:0007669"/>
    <property type="project" value="UniProtKB-SubCell"/>
</dbReference>
<dbReference type="GO" id="GO:0007596">
    <property type="term" value="P:blood coagulation"/>
    <property type="evidence" value="ECO:0000315"/>
    <property type="project" value="MGI"/>
</dbReference>
<dbReference type="GO" id="GO:0072378">
    <property type="term" value="P:blood coagulation, fibrin clot formation"/>
    <property type="evidence" value="ECO:0007669"/>
    <property type="project" value="Ensembl"/>
</dbReference>
<dbReference type="CDD" id="cd00033">
    <property type="entry name" value="CCP"/>
    <property type="match status" value="7"/>
</dbReference>
<dbReference type="FunFam" id="2.10.70.10:FF:000054">
    <property type="entry name" value="Complement inhibitory factor H"/>
    <property type="match status" value="1"/>
</dbReference>
<dbReference type="FunFam" id="2.10.70.10:FF:000060">
    <property type="entry name" value="Complement inhibitory factor H"/>
    <property type="match status" value="1"/>
</dbReference>
<dbReference type="Gene3D" id="2.10.70.10">
    <property type="entry name" value="Complement Module, domain 1"/>
    <property type="match status" value="10"/>
</dbReference>
<dbReference type="InterPro" id="IPR051503">
    <property type="entry name" value="ComplSys_Reg/VirEntry_Med"/>
</dbReference>
<dbReference type="InterPro" id="IPR035976">
    <property type="entry name" value="Sushi/SCR/CCP_sf"/>
</dbReference>
<dbReference type="InterPro" id="IPR000436">
    <property type="entry name" value="Sushi_SCR_CCP_dom"/>
</dbReference>
<dbReference type="PANTHER" id="PTHR45785:SF3">
    <property type="entry name" value="COAGULATION FACTOR XIII B CHAIN"/>
    <property type="match status" value="1"/>
</dbReference>
<dbReference type="PANTHER" id="PTHR45785">
    <property type="entry name" value="COMPLEMENT FACTOR H-RELATED"/>
    <property type="match status" value="1"/>
</dbReference>
<dbReference type="Pfam" id="PF00084">
    <property type="entry name" value="Sushi"/>
    <property type="match status" value="8"/>
</dbReference>
<dbReference type="SMART" id="SM00032">
    <property type="entry name" value="CCP"/>
    <property type="match status" value="8"/>
</dbReference>
<dbReference type="SUPFAM" id="SSF57535">
    <property type="entry name" value="Complement control module/SCR domain"/>
    <property type="match status" value="10"/>
</dbReference>
<dbReference type="PROSITE" id="PS50923">
    <property type="entry name" value="SUSHI"/>
    <property type="match status" value="7"/>
</dbReference>
<reference key="1">
    <citation type="journal article" date="1993" name="Genomics">
        <title>Molecular cloning of the b subunit of mouse coagulation factor XIII and assignment of the gene to chromosome 1: close evolutionary relationship to complement factor H.</title>
        <authorList>
            <person name="Nonaka M."/>
            <person name="Matsuda Y."/>
            <person name="Shiroishi T."/>
            <person name="Moriwaki K."/>
            <person name="Nonaka M."/>
            <person name="Natsuume-Sakai S."/>
        </authorList>
    </citation>
    <scope>NUCLEOTIDE SEQUENCE [MRNA]</scope>
    <scope>TISSUE SPECIFICITY</scope>
    <source>
        <strain>B10.D2/OSN</strain>
        <tissue>Liver</tissue>
    </source>
</reference>
<reference key="2">
    <citation type="journal article" date="2009" name="PLoS Biol.">
        <title>Lineage-specific biology revealed by a finished genome assembly of the mouse.</title>
        <authorList>
            <person name="Church D.M."/>
            <person name="Goodstadt L."/>
            <person name="Hillier L.W."/>
            <person name="Zody M.C."/>
            <person name="Goldstein S."/>
            <person name="She X."/>
            <person name="Bult C.J."/>
            <person name="Agarwala R."/>
            <person name="Cherry J.L."/>
            <person name="DiCuccio M."/>
            <person name="Hlavina W."/>
            <person name="Kapustin Y."/>
            <person name="Meric P."/>
            <person name="Maglott D."/>
            <person name="Birtle Z."/>
            <person name="Marques A.C."/>
            <person name="Graves T."/>
            <person name="Zhou S."/>
            <person name="Teague B."/>
            <person name="Potamousis K."/>
            <person name="Churas C."/>
            <person name="Place M."/>
            <person name="Herschleb J."/>
            <person name="Runnheim R."/>
            <person name="Forrest D."/>
            <person name="Amos-Landgraf J."/>
            <person name="Schwartz D.C."/>
            <person name="Cheng Z."/>
            <person name="Lindblad-Toh K."/>
            <person name="Eichler E.E."/>
            <person name="Ponting C.P."/>
        </authorList>
    </citation>
    <scope>NUCLEOTIDE SEQUENCE [LARGE SCALE GENOMIC DNA]</scope>
    <source>
        <strain>C57BL/6J</strain>
    </source>
</reference>
<reference key="3">
    <citation type="submission" date="2005-07" db="EMBL/GenBank/DDBJ databases">
        <authorList>
            <person name="Mural R.J."/>
            <person name="Adams M.D."/>
            <person name="Myers E.W."/>
            <person name="Smith H.O."/>
            <person name="Venter J.C."/>
        </authorList>
    </citation>
    <scope>NUCLEOTIDE SEQUENCE [LARGE SCALE GENOMIC DNA]</scope>
</reference>
<reference key="4">
    <citation type="journal article" date="2006" name="J. Proteome Res.">
        <title>Proteome-wide characterization of N-glycosylation events by diagonal chromatography.</title>
        <authorList>
            <person name="Ghesquiere B."/>
            <person name="Van Damme J."/>
            <person name="Martens L."/>
            <person name="Vandekerckhove J."/>
            <person name="Gevaert K."/>
        </authorList>
    </citation>
    <scope>GLYCOSYLATION [LARGE SCALE ANALYSIS] AT ASN-546</scope>
    <source>
        <strain>C57BL/6J</strain>
        <tissue>Plasma</tissue>
    </source>
</reference>
<reference key="5">
    <citation type="journal article" date="2007" name="J. Proteome Res.">
        <title>Enhanced analysis of the mouse plasma proteome using cysteine-containing tryptic glycopeptides.</title>
        <authorList>
            <person name="Bernhard O.K."/>
            <person name="Kapp E.A."/>
            <person name="Simpson R.J."/>
        </authorList>
    </citation>
    <scope>GLYCOSYLATION [LARGE SCALE ANALYSIS] AT ASN-546</scope>
    <source>
        <strain>C57BL/6J</strain>
        <tissue>Plasma</tissue>
    </source>
</reference>
<accession>Q07968</accession>
<accession>B1AY02</accession>
<keyword id="KW-0094">Blood coagulation</keyword>
<keyword id="KW-1015">Disulfide bond</keyword>
<keyword id="KW-0325">Glycoprotein</keyword>
<keyword id="KW-0356">Hemostasis</keyword>
<keyword id="KW-1185">Reference proteome</keyword>
<keyword id="KW-0677">Repeat</keyword>
<keyword id="KW-0964">Secreted</keyword>
<keyword id="KW-0732">Signal</keyword>
<keyword id="KW-0768">Sushi</keyword>
<protein>
    <recommendedName>
        <fullName>Coagulation factor XIII B chain</fullName>
    </recommendedName>
    <alternativeName>
        <fullName>Protein-glutamine gamma-glutamyltransferase B chain</fullName>
    </alternativeName>
    <alternativeName>
        <fullName>Transglutaminase B chain</fullName>
    </alternativeName>
</protein>
<proteinExistence type="evidence at protein level"/>